<reference key="1">
    <citation type="journal article" date="2004" name="Nature">
        <title>Genome evolution in yeasts.</title>
        <authorList>
            <person name="Dujon B."/>
            <person name="Sherman D."/>
            <person name="Fischer G."/>
            <person name="Durrens P."/>
            <person name="Casaregola S."/>
            <person name="Lafontaine I."/>
            <person name="de Montigny J."/>
            <person name="Marck C."/>
            <person name="Neuveglise C."/>
            <person name="Talla E."/>
            <person name="Goffard N."/>
            <person name="Frangeul L."/>
            <person name="Aigle M."/>
            <person name="Anthouard V."/>
            <person name="Babour A."/>
            <person name="Barbe V."/>
            <person name="Barnay S."/>
            <person name="Blanchin S."/>
            <person name="Beckerich J.-M."/>
            <person name="Beyne E."/>
            <person name="Bleykasten C."/>
            <person name="Boisrame A."/>
            <person name="Boyer J."/>
            <person name="Cattolico L."/>
            <person name="Confanioleri F."/>
            <person name="de Daruvar A."/>
            <person name="Despons L."/>
            <person name="Fabre E."/>
            <person name="Fairhead C."/>
            <person name="Ferry-Dumazet H."/>
            <person name="Groppi A."/>
            <person name="Hantraye F."/>
            <person name="Hennequin C."/>
            <person name="Jauniaux N."/>
            <person name="Joyet P."/>
            <person name="Kachouri R."/>
            <person name="Kerrest A."/>
            <person name="Koszul R."/>
            <person name="Lemaire M."/>
            <person name="Lesur I."/>
            <person name="Ma L."/>
            <person name="Muller H."/>
            <person name="Nicaud J.-M."/>
            <person name="Nikolski M."/>
            <person name="Oztas S."/>
            <person name="Ozier-Kalogeropoulos O."/>
            <person name="Pellenz S."/>
            <person name="Potier S."/>
            <person name="Richard G.-F."/>
            <person name="Straub M.-L."/>
            <person name="Suleau A."/>
            <person name="Swennen D."/>
            <person name="Tekaia F."/>
            <person name="Wesolowski-Louvel M."/>
            <person name="Westhof E."/>
            <person name="Wirth B."/>
            <person name="Zeniou-Meyer M."/>
            <person name="Zivanovic Y."/>
            <person name="Bolotin-Fukuhara M."/>
            <person name="Thierry A."/>
            <person name="Bouchier C."/>
            <person name="Caudron B."/>
            <person name="Scarpelli C."/>
            <person name="Gaillardin C."/>
            <person name="Weissenbach J."/>
            <person name="Wincker P."/>
            <person name="Souciet J.-L."/>
        </authorList>
    </citation>
    <scope>NUCLEOTIDE SEQUENCE [LARGE SCALE GENOMIC DNA]</scope>
    <source>
        <strain>ATCC 8585 / CBS 2359 / DSM 70799 / NBRC 1267 / NRRL Y-1140 / WM37</strain>
    </source>
</reference>
<comment type="function">
    <text evidence="2">RNA-binding protein involved in post-transcriptional regulation through transcript degradation.</text>
</comment>
<comment type="subunit">
    <text evidence="2">Monomer. Binds to RNA.</text>
</comment>
<comment type="subcellular location">
    <subcellularLocation>
        <location evidence="2">Cytoplasm</location>
        <location evidence="2">Cytosol</location>
    </subcellularLocation>
    <subcellularLocation>
        <location evidence="1">Cytoplasm</location>
        <location evidence="1">P-body</location>
    </subcellularLocation>
</comment>
<comment type="similarity">
    <text evidence="5">Belongs to the VTS1 family.</text>
</comment>
<feature type="chain" id="PRO_0000081453" description="RNA-binding protein VTS1">
    <location>
        <begin position="1"/>
        <end position="459"/>
    </location>
</feature>
<feature type="domain" description="SAM" evidence="3">
    <location>
        <begin position="387"/>
        <end position="448"/>
    </location>
</feature>
<feature type="region of interest" description="Disordered" evidence="4">
    <location>
        <begin position="1"/>
        <end position="33"/>
    </location>
</feature>
<feature type="region of interest" description="Disordered" evidence="4">
    <location>
        <begin position="259"/>
        <end position="336"/>
    </location>
</feature>
<feature type="compositionally biased region" description="Polar residues" evidence="4">
    <location>
        <begin position="1"/>
        <end position="18"/>
    </location>
</feature>
<feature type="compositionally biased region" description="Low complexity" evidence="4">
    <location>
        <begin position="267"/>
        <end position="313"/>
    </location>
</feature>
<feature type="compositionally biased region" description="Polar residues" evidence="4">
    <location>
        <begin position="314"/>
        <end position="336"/>
    </location>
</feature>
<gene>
    <name type="primary">VTS1</name>
    <name type="ordered locus">KLLA0A03641g</name>
</gene>
<name>VTS1_KLULA</name>
<evidence type="ECO:0000250" key="1">
    <source>
        <dbReference type="UniProtKB" id="J9VVN9"/>
    </source>
</evidence>
<evidence type="ECO:0000250" key="2">
    <source>
        <dbReference type="UniProtKB" id="Q08831"/>
    </source>
</evidence>
<evidence type="ECO:0000255" key="3">
    <source>
        <dbReference type="PROSITE-ProRule" id="PRU00184"/>
    </source>
</evidence>
<evidence type="ECO:0000256" key="4">
    <source>
        <dbReference type="SAM" id="MobiDB-lite"/>
    </source>
</evidence>
<evidence type="ECO:0000305" key="5"/>
<organism>
    <name type="scientific">Kluyveromyces lactis (strain ATCC 8585 / CBS 2359 / DSM 70799 / NBRC 1267 / NRRL Y-1140 / WM37)</name>
    <name type="common">Yeast</name>
    <name type="synonym">Candida sphaerica</name>
    <dbReference type="NCBI Taxonomy" id="284590"/>
    <lineage>
        <taxon>Eukaryota</taxon>
        <taxon>Fungi</taxon>
        <taxon>Dikarya</taxon>
        <taxon>Ascomycota</taxon>
        <taxon>Saccharomycotina</taxon>
        <taxon>Saccharomycetes</taxon>
        <taxon>Saccharomycetales</taxon>
        <taxon>Saccharomycetaceae</taxon>
        <taxon>Kluyveromyces</taxon>
    </lineage>
</organism>
<accession>Q6CY29</accession>
<dbReference type="EMBL" id="CR382121">
    <property type="protein sequence ID" value="CAH02748.1"/>
    <property type="molecule type" value="Genomic_DNA"/>
</dbReference>
<dbReference type="RefSeq" id="XP_451160.1">
    <property type="nucleotide sequence ID" value="XM_451160.1"/>
</dbReference>
<dbReference type="SMR" id="Q6CY29"/>
<dbReference type="FunCoup" id="Q6CY29">
    <property type="interactions" value="55"/>
</dbReference>
<dbReference type="STRING" id="284590.Q6CY29"/>
<dbReference type="PaxDb" id="284590-Q6CY29"/>
<dbReference type="KEGG" id="kla:KLLA0_A03641g"/>
<dbReference type="eggNOG" id="KOG3791">
    <property type="taxonomic scope" value="Eukaryota"/>
</dbReference>
<dbReference type="HOGENOM" id="CLU_595905_0_0_1"/>
<dbReference type="InParanoid" id="Q6CY29"/>
<dbReference type="OMA" id="QQNTVMD"/>
<dbReference type="Proteomes" id="UP000000598">
    <property type="component" value="Chromosome A"/>
</dbReference>
<dbReference type="GO" id="GO:0005829">
    <property type="term" value="C:cytosol"/>
    <property type="evidence" value="ECO:0007669"/>
    <property type="project" value="UniProtKB-SubCell"/>
</dbReference>
<dbReference type="GO" id="GO:0000932">
    <property type="term" value="C:P-body"/>
    <property type="evidence" value="ECO:0007669"/>
    <property type="project" value="UniProtKB-SubCell"/>
</dbReference>
<dbReference type="GO" id="GO:0003729">
    <property type="term" value="F:mRNA binding"/>
    <property type="evidence" value="ECO:0007669"/>
    <property type="project" value="InterPro"/>
</dbReference>
<dbReference type="GO" id="GO:0000166">
    <property type="term" value="F:nucleotide binding"/>
    <property type="evidence" value="ECO:0007669"/>
    <property type="project" value="UniProtKB-KW"/>
</dbReference>
<dbReference type="GO" id="GO:0000289">
    <property type="term" value="P:nuclear-transcribed mRNA poly(A) tail shortening"/>
    <property type="evidence" value="ECO:0007669"/>
    <property type="project" value="TreeGrafter"/>
</dbReference>
<dbReference type="GO" id="GO:0015031">
    <property type="term" value="P:protein transport"/>
    <property type="evidence" value="ECO:0007669"/>
    <property type="project" value="UniProtKB-KW"/>
</dbReference>
<dbReference type="CDD" id="cd09556">
    <property type="entry name" value="SAM_VTS1_fungal"/>
    <property type="match status" value="1"/>
</dbReference>
<dbReference type="Gene3D" id="1.10.150.50">
    <property type="entry name" value="Transcription Factor, Ets-1"/>
    <property type="match status" value="1"/>
</dbReference>
<dbReference type="InterPro" id="IPR001660">
    <property type="entry name" value="SAM"/>
</dbReference>
<dbReference type="InterPro" id="IPR013761">
    <property type="entry name" value="SAM/pointed_sf"/>
</dbReference>
<dbReference type="InterPro" id="IPR050897">
    <property type="entry name" value="SMAUG/VTS1_RNA-bind"/>
</dbReference>
<dbReference type="InterPro" id="IPR037635">
    <property type="entry name" value="VTS1_SAM"/>
</dbReference>
<dbReference type="PANTHER" id="PTHR12515:SF5">
    <property type="entry name" value="PROTEIN SMAUG"/>
    <property type="match status" value="1"/>
</dbReference>
<dbReference type="PANTHER" id="PTHR12515">
    <property type="entry name" value="STERILE ALPHA MOTIF DOMAIN CONTAINING PROTEIN 4-RELATED"/>
    <property type="match status" value="1"/>
</dbReference>
<dbReference type="Pfam" id="PF07647">
    <property type="entry name" value="SAM_2"/>
    <property type="match status" value="1"/>
</dbReference>
<dbReference type="SMART" id="SM00454">
    <property type="entry name" value="SAM"/>
    <property type="match status" value="1"/>
</dbReference>
<dbReference type="SUPFAM" id="SSF47769">
    <property type="entry name" value="SAM/Pointed domain"/>
    <property type="match status" value="1"/>
</dbReference>
<dbReference type="PROSITE" id="PS50105">
    <property type="entry name" value="SAM_DOMAIN"/>
    <property type="match status" value="1"/>
</dbReference>
<sequence>MSSQNMLSSLPGRTQSPVNLPRGAHPGAVLLSPKGSSANLQALGTNPTSPSQQPLFLNDLLNQQQFSLDSQLHLRDDLGRPSNMVSPLSNSAMNPTASNGSTFLDTFSRPTSSMAINHQPLPLQHSNSNANVMVNFTNDVNQLCNWISMLTPSQQNTVMDNLLSSLNEEVLHSTKLKLDSLVHSGYISPQLGPIASPIPNKVQSQVHQAENPQPLNLDSVLNGDNIYRQWSPLPQNTASPMQQPMYDYLADIPRPRSADPYNAFKKGGLSSGNANNNSNNGNAISNLNSSNPFGTNTVSSTNMSNSNSSSSATGRKNMNQNQHQNQYLNRPQSPTNIKANVFNKTSLATSSSNSGNALTTVNSASSTTSNFNCTNNSMNAKGLCDPKLLKNVPAWLKSLRLHKYSEALGSKPWFELIYLDDEALENMGVSALGARRKLLKAFSIVREYKANDMIDSSAF</sequence>
<proteinExistence type="inferred from homology"/>
<keyword id="KW-0963">Cytoplasm</keyword>
<keyword id="KW-0547">Nucleotide-binding</keyword>
<keyword id="KW-0653">Protein transport</keyword>
<keyword id="KW-1185">Reference proteome</keyword>
<keyword id="KW-0694">RNA-binding</keyword>
<keyword id="KW-0813">Transport</keyword>
<protein>
    <recommendedName>
        <fullName>RNA-binding protein VTS1</fullName>
    </recommendedName>
</protein>